<protein>
    <recommendedName>
        <fullName evidence="1">Glutamate--tRNA ligase 2</fullName>
        <ecNumber evidence="1">6.1.1.17</ecNumber>
    </recommendedName>
    <alternativeName>
        <fullName evidence="1">Glutamyl-tRNA synthetase 2</fullName>
        <shortName evidence="1">GluRS 2</shortName>
    </alternativeName>
</protein>
<sequence>MRVVTRFAPSPTGSLHLGGARTALFNWLFARHHKGKFLLRMEDTDKKRSSDVVVQSIIDDMSWLGLQHDGDIVVQSSRAARHVAVARELVELGRAYRCYCSEDEVNEQKLQSEGTGKYFRHVCPWKHLNSTGDLPNKPYVVRLKSPENTTIEFLDGVYGKISVKSDQIDDMVILRSDGTPTYLLAVVVDDHDMEITHIIRGSDHITNTVKQIVLAEAMSWVSPKFFHIPLIHDENGAKLSKRNRAPGIHEYKEQGFLPEALCNYLLRMGWSYQNKEIVSMQEAIALFSMEDVGVSCSCLDYKKLVFLNHHYMGSKSESEILDLLLPILEEKLGGRISEEKLSRLSLGIKQLVERAKTLTDLAEDSLFYVQDVEININPEAVETIQNSKKFLAELLESMSGIHPDMWKKTHLSSQIKEFSKTRNLAMSDVYHFLRASITGRLQSPNISEVMEILGQEMCINRMLSAQEI</sequence>
<reference key="1">
    <citation type="journal article" date="2006" name="PLoS Genet.">
        <title>Comparative genomics of emerging human ehrlichiosis agents.</title>
        <authorList>
            <person name="Dunning Hotopp J.C."/>
            <person name="Lin M."/>
            <person name="Madupu R."/>
            <person name="Crabtree J."/>
            <person name="Angiuoli S.V."/>
            <person name="Eisen J.A."/>
            <person name="Seshadri R."/>
            <person name="Ren Q."/>
            <person name="Wu M."/>
            <person name="Utterback T.R."/>
            <person name="Smith S."/>
            <person name="Lewis M."/>
            <person name="Khouri H."/>
            <person name="Zhang C."/>
            <person name="Niu H."/>
            <person name="Lin Q."/>
            <person name="Ohashi N."/>
            <person name="Zhi N."/>
            <person name="Nelson W.C."/>
            <person name="Brinkac L.M."/>
            <person name="Dodson R.J."/>
            <person name="Rosovitz M.J."/>
            <person name="Sundaram J.P."/>
            <person name="Daugherty S.C."/>
            <person name="Davidsen T."/>
            <person name="Durkin A.S."/>
            <person name="Gwinn M.L."/>
            <person name="Haft D.H."/>
            <person name="Selengut J.D."/>
            <person name="Sullivan S.A."/>
            <person name="Zafar N."/>
            <person name="Zhou L."/>
            <person name="Benahmed F."/>
            <person name="Forberger H."/>
            <person name="Halpin R."/>
            <person name="Mulligan S."/>
            <person name="Robinson J."/>
            <person name="White O."/>
            <person name="Rikihisa Y."/>
            <person name="Tettelin H."/>
        </authorList>
    </citation>
    <scope>NUCLEOTIDE SEQUENCE [LARGE SCALE GENOMIC DNA]</scope>
    <source>
        <strain>HZ</strain>
    </source>
</reference>
<feature type="chain" id="PRO_0000237338" description="Glutamate--tRNA ligase 2">
    <location>
        <begin position="1"/>
        <end position="468"/>
    </location>
</feature>
<feature type="short sequence motif" description="'HIGH' region" evidence="1">
    <location>
        <begin position="9"/>
        <end position="19"/>
    </location>
</feature>
<feature type="short sequence motif" description="'KMSKS' region" evidence="1">
    <location>
        <begin position="238"/>
        <end position="242"/>
    </location>
</feature>
<feature type="binding site" evidence="1">
    <location>
        <position position="241"/>
    </location>
    <ligand>
        <name>ATP</name>
        <dbReference type="ChEBI" id="CHEBI:30616"/>
    </ligand>
</feature>
<name>SYE2_ANAPZ</name>
<gene>
    <name evidence="1" type="primary">gltX2</name>
    <name type="synonym">gltX-2</name>
    <name type="ordered locus">APH_0408</name>
</gene>
<accession>Q2GKT8</accession>
<organism>
    <name type="scientific">Anaplasma phagocytophilum (strain HZ)</name>
    <dbReference type="NCBI Taxonomy" id="212042"/>
    <lineage>
        <taxon>Bacteria</taxon>
        <taxon>Pseudomonadati</taxon>
        <taxon>Pseudomonadota</taxon>
        <taxon>Alphaproteobacteria</taxon>
        <taxon>Rickettsiales</taxon>
        <taxon>Anaplasmataceae</taxon>
        <taxon>Anaplasma</taxon>
        <taxon>phagocytophilum group</taxon>
    </lineage>
</organism>
<proteinExistence type="inferred from homology"/>
<comment type="function">
    <text evidence="1">Catalyzes the attachment of glutamate to tRNA(Glu) in a two-step reaction: glutamate is first activated by ATP to form Glu-AMP and then transferred to the acceptor end of tRNA(Glu).</text>
</comment>
<comment type="catalytic activity">
    <reaction evidence="1">
        <text>tRNA(Glu) + L-glutamate + ATP = L-glutamyl-tRNA(Glu) + AMP + diphosphate</text>
        <dbReference type="Rhea" id="RHEA:23540"/>
        <dbReference type="Rhea" id="RHEA-COMP:9663"/>
        <dbReference type="Rhea" id="RHEA-COMP:9680"/>
        <dbReference type="ChEBI" id="CHEBI:29985"/>
        <dbReference type="ChEBI" id="CHEBI:30616"/>
        <dbReference type="ChEBI" id="CHEBI:33019"/>
        <dbReference type="ChEBI" id="CHEBI:78442"/>
        <dbReference type="ChEBI" id="CHEBI:78520"/>
        <dbReference type="ChEBI" id="CHEBI:456215"/>
        <dbReference type="EC" id="6.1.1.17"/>
    </reaction>
</comment>
<comment type="subunit">
    <text evidence="1">Monomer.</text>
</comment>
<comment type="subcellular location">
    <subcellularLocation>
        <location evidence="1">Cytoplasm</location>
    </subcellularLocation>
</comment>
<comment type="similarity">
    <text evidence="1">Belongs to the class-I aminoacyl-tRNA synthetase family. Glutamate--tRNA ligase type 1 subfamily.</text>
</comment>
<dbReference type="EC" id="6.1.1.17" evidence="1"/>
<dbReference type="EMBL" id="CP000235">
    <property type="protein sequence ID" value="ABD43300.1"/>
    <property type="molecule type" value="Genomic_DNA"/>
</dbReference>
<dbReference type="SMR" id="Q2GKT8"/>
<dbReference type="STRING" id="212042.APH_0408"/>
<dbReference type="PaxDb" id="212042-APH_0408"/>
<dbReference type="EnsemblBacteria" id="ABD43300">
    <property type="protein sequence ID" value="ABD43300"/>
    <property type="gene ID" value="APH_0408"/>
</dbReference>
<dbReference type="KEGG" id="aph:APH_0408"/>
<dbReference type="eggNOG" id="COG0008">
    <property type="taxonomic scope" value="Bacteria"/>
</dbReference>
<dbReference type="HOGENOM" id="CLU_015768_6_0_5"/>
<dbReference type="Proteomes" id="UP000001943">
    <property type="component" value="Chromosome"/>
</dbReference>
<dbReference type="GO" id="GO:0005829">
    <property type="term" value="C:cytosol"/>
    <property type="evidence" value="ECO:0007669"/>
    <property type="project" value="TreeGrafter"/>
</dbReference>
<dbReference type="GO" id="GO:0005524">
    <property type="term" value="F:ATP binding"/>
    <property type="evidence" value="ECO:0007669"/>
    <property type="project" value="UniProtKB-UniRule"/>
</dbReference>
<dbReference type="GO" id="GO:0004818">
    <property type="term" value="F:glutamate-tRNA ligase activity"/>
    <property type="evidence" value="ECO:0007669"/>
    <property type="project" value="UniProtKB-UniRule"/>
</dbReference>
<dbReference type="GO" id="GO:0000049">
    <property type="term" value="F:tRNA binding"/>
    <property type="evidence" value="ECO:0007669"/>
    <property type="project" value="InterPro"/>
</dbReference>
<dbReference type="GO" id="GO:0008270">
    <property type="term" value="F:zinc ion binding"/>
    <property type="evidence" value="ECO:0007669"/>
    <property type="project" value="UniProtKB-UniRule"/>
</dbReference>
<dbReference type="GO" id="GO:0006424">
    <property type="term" value="P:glutamyl-tRNA aminoacylation"/>
    <property type="evidence" value="ECO:0007669"/>
    <property type="project" value="UniProtKB-UniRule"/>
</dbReference>
<dbReference type="CDD" id="cd00808">
    <property type="entry name" value="GluRS_core"/>
    <property type="match status" value="1"/>
</dbReference>
<dbReference type="FunFam" id="3.40.50.620:FF:000007">
    <property type="entry name" value="Glutamate--tRNA ligase"/>
    <property type="match status" value="1"/>
</dbReference>
<dbReference type="Gene3D" id="1.10.10.350">
    <property type="match status" value="1"/>
</dbReference>
<dbReference type="Gene3D" id="3.40.50.620">
    <property type="entry name" value="HUPs"/>
    <property type="match status" value="1"/>
</dbReference>
<dbReference type="HAMAP" id="MF_00022">
    <property type="entry name" value="Glu_tRNA_synth_type1"/>
    <property type="match status" value="1"/>
</dbReference>
<dbReference type="InterPro" id="IPR045462">
    <property type="entry name" value="aa-tRNA-synth_I_cd-bd"/>
</dbReference>
<dbReference type="InterPro" id="IPR020751">
    <property type="entry name" value="aa-tRNA-synth_I_codon-bd_sub2"/>
</dbReference>
<dbReference type="InterPro" id="IPR001412">
    <property type="entry name" value="aa-tRNA-synth_I_CS"/>
</dbReference>
<dbReference type="InterPro" id="IPR008925">
    <property type="entry name" value="aa_tRNA-synth_I_cd-bd_sf"/>
</dbReference>
<dbReference type="InterPro" id="IPR004527">
    <property type="entry name" value="Glu-tRNA-ligase_bac/mito"/>
</dbReference>
<dbReference type="InterPro" id="IPR000924">
    <property type="entry name" value="Glu/Gln-tRNA-synth"/>
</dbReference>
<dbReference type="InterPro" id="IPR020058">
    <property type="entry name" value="Glu/Gln-tRNA-synth_Ib_cat-dom"/>
</dbReference>
<dbReference type="InterPro" id="IPR049940">
    <property type="entry name" value="GluQ/Sye"/>
</dbReference>
<dbReference type="InterPro" id="IPR033910">
    <property type="entry name" value="GluRS_core"/>
</dbReference>
<dbReference type="InterPro" id="IPR014729">
    <property type="entry name" value="Rossmann-like_a/b/a_fold"/>
</dbReference>
<dbReference type="NCBIfam" id="TIGR00464">
    <property type="entry name" value="gltX_bact"/>
    <property type="match status" value="1"/>
</dbReference>
<dbReference type="PANTHER" id="PTHR43311">
    <property type="entry name" value="GLUTAMATE--TRNA LIGASE"/>
    <property type="match status" value="1"/>
</dbReference>
<dbReference type="PANTHER" id="PTHR43311:SF2">
    <property type="entry name" value="GLUTAMATE--TRNA LIGASE, MITOCHONDRIAL-RELATED"/>
    <property type="match status" value="1"/>
</dbReference>
<dbReference type="Pfam" id="PF19269">
    <property type="entry name" value="Anticodon_2"/>
    <property type="match status" value="1"/>
</dbReference>
<dbReference type="Pfam" id="PF00749">
    <property type="entry name" value="tRNA-synt_1c"/>
    <property type="match status" value="1"/>
</dbReference>
<dbReference type="PRINTS" id="PR00987">
    <property type="entry name" value="TRNASYNTHGLU"/>
</dbReference>
<dbReference type="SUPFAM" id="SSF48163">
    <property type="entry name" value="An anticodon-binding domain of class I aminoacyl-tRNA synthetases"/>
    <property type="match status" value="1"/>
</dbReference>
<dbReference type="SUPFAM" id="SSF52374">
    <property type="entry name" value="Nucleotidylyl transferase"/>
    <property type="match status" value="1"/>
</dbReference>
<dbReference type="PROSITE" id="PS00178">
    <property type="entry name" value="AA_TRNA_LIGASE_I"/>
    <property type="match status" value="1"/>
</dbReference>
<keyword id="KW-0030">Aminoacyl-tRNA synthetase</keyword>
<keyword id="KW-0067">ATP-binding</keyword>
<keyword id="KW-0963">Cytoplasm</keyword>
<keyword id="KW-0436">Ligase</keyword>
<keyword id="KW-0547">Nucleotide-binding</keyword>
<keyword id="KW-0648">Protein biosynthesis</keyword>
<evidence type="ECO:0000255" key="1">
    <source>
        <dbReference type="HAMAP-Rule" id="MF_00022"/>
    </source>
</evidence>